<sequence length="139" mass="15622">MAHRAFIQVIFTGAQVFGRAFAESYRQAAAQTAKQTANASRGRGASAEYGGITLDESSKILNIENEQDMNLDKINERFKYLFEINDKEKGGSFYLQSKIYRAAERLKYELAEKEKAANPELNQEQAKSSSTTESPELKK</sequence>
<gene>
    <name type="primary">PAM16</name>
    <name type="synonym">TIM16</name>
    <name type="ordered locus">KLLA0F13860g</name>
</gene>
<evidence type="ECO:0000250" key="1"/>
<evidence type="ECO:0000256" key="2">
    <source>
        <dbReference type="SAM" id="MobiDB-lite"/>
    </source>
</evidence>
<evidence type="ECO:0000305" key="3"/>
<reference key="1">
    <citation type="journal article" date="2004" name="Nature">
        <title>Genome evolution in yeasts.</title>
        <authorList>
            <person name="Dujon B."/>
            <person name="Sherman D."/>
            <person name="Fischer G."/>
            <person name="Durrens P."/>
            <person name="Casaregola S."/>
            <person name="Lafontaine I."/>
            <person name="de Montigny J."/>
            <person name="Marck C."/>
            <person name="Neuveglise C."/>
            <person name="Talla E."/>
            <person name="Goffard N."/>
            <person name="Frangeul L."/>
            <person name="Aigle M."/>
            <person name="Anthouard V."/>
            <person name="Babour A."/>
            <person name="Barbe V."/>
            <person name="Barnay S."/>
            <person name="Blanchin S."/>
            <person name="Beckerich J.-M."/>
            <person name="Beyne E."/>
            <person name="Bleykasten C."/>
            <person name="Boisrame A."/>
            <person name="Boyer J."/>
            <person name="Cattolico L."/>
            <person name="Confanioleri F."/>
            <person name="de Daruvar A."/>
            <person name="Despons L."/>
            <person name="Fabre E."/>
            <person name="Fairhead C."/>
            <person name="Ferry-Dumazet H."/>
            <person name="Groppi A."/>
            <person name="Hantraye F."/>
            <person name="Hennequin C."/>
            <person name="Jauniaux N."/>
            <person name="Joyet P."/>
            <person name="Kachouri R."/>
            <person name="Kerrest A."/>
            <person name="Koszul R."/>
            <person name="Lemaire M."/>
            <person name="Lesur I."/>
            <person name="Ma L."/>
            <person name="Muller H."/>
            <person name="Nicaud J.-M."/>
            <person name="Nikolski M."/>
            <person name="Oztas S."/>
            <person name="Ozier-Kalogeropoulos O."/>
            <person name="Pellenz S."/>
            <person name="Potier S."/>
            <person name="Richard G.-F."/>
            <person name="Straub M.-L."/>
            <person name="Suleau A."/>
            <person name="Swennen D."/>
            <person name="Tekaia F."/>
            <person name="Wesolowski-Louvel M."/>
            <person name="Westhof E."/>
            <person name="Wirth B."/>
            <person name="Zeniou-Meyer M."/>
            <person name="Zivanovic Y."/>
            <person name="Bolotin-Fukuhara M."/>
            <person name="Thierry A."/>
            <person name="Bouchier C."/>
            <person name="Caudron B."/>
            <person name="Scarpelli C."/>
            <person name="Gaillardin C."/>
            <person name="Weissenbach J."/>
            <person name="Wincker P."/>
            <person name="Souciet J.-L."/>
        </authorList>
    </citation>
    <scope>NUCLEOTIDE SEQUENCE [LARGE SCALE GENOMIC DNA]</scope>
    <source>
        <strain>ATCC 8585 / CBS 2359 / DSM 70799 / NBRC 1267 / NRRL Y-1140 / WM37</strain>
    </source>
</reference>
<accession>Q6CK35</accession>
<comment type="function">
    <text evidence="1">Essential component of the PAM complex, a complex required for the translocation of transit peptide-containing proteins from the inner membrane into the mitochondrial matrix in an ATP-dependent manner. In the complex, it is required to regulate activity of mtHSP70 (SSC1) via its interaction with PAM18/TIM14. May act by positioning PAM18/TIM14 in juxtaposition to mtHSP70 at the translocon to maximize ATPase stimulation (By similarity).</text>
</comment>
<comment type="subunit">
    <text evidence="1">Heterodimer with PAM18. Component of the PAM complex, at least composed of mtHsp70, MGE1, TIM44, PAM16, PAM17 and PAM18 (By similarity).</text>
</comment>
<comment type="subcellular location">
    <subcellularLocation>
        <location evidence="1">Mitochondrion inner membrane</location>
        <topology evidence="1">Peripheral membrane protein</topology>
    </subcellularLocation>
</comment>
<comment type="domain">
    <text evidence="1">The J-like region, although related to the J domain does not stimulate ATPase activity of mtHSP70. It nevertheless mediates the heterodimerization with the J domain of PAM18 and is therefore essential for PAM complex function (By similarity).</text>
</comment>
<comment type="similarity">
    <text evidence="3">Belongs to the TIM16/PAM16 family.</text>
</comment>
<name>TIM16_KLULA</name>
<organism>
    <name type="scientific">Kluyveromyces lactis (strain ATCC 8585 / CBS 2359 / DSM 70799 / NBRC 1267 / NRRL Y-1140 / WM37)</name>
    <name type="common">Yeast</name>
    <name type="synonym">Candida sphaerica</name>
    <dbReference type="NCBI Taxonomy" id="284590"/>
    <lineage>
        <taxon>Eukaryota</taxon>
        <taxon>Fungi</taxon>
        <taxon>Dikarya</taxon>
        <taxon>Ascomycota</taxon>
        <taxon>Saccharomycotina</taxon>
        <taxon>Saccharomycetes</taxon>
        <taxon>Saccharomycetales</taxon>
        <taxon>Saccharomycetaceae</taxon>
        <taxon>Kluyveromyces</taxon>
    </lineage>
</organism>
<proteinExistence type="inferred from homology"/>
<keyword id="KW-0472">Membrane</keyword>
<keyword id="KW-0496">Mitochondrion</keyword>
<keyword id="KW-0999">Mitochondrion inner membrane</keyword>
<keyword id="KW-0653">Protein transport</keyword>
<keyword id="KW-1185">Reference proteome</keyword>
<keyword id="KW-0811">Translocation</keyword>
<keyword id="KW-0813">Transport</keyword>
<protein>
    <recommendedName>
        <fullName>Mitochondrial import inner membrane translocase subunit TIM16</fullName>
    </recommendedName>
    <alternativeName>
        <fullName>Presequence translocated-associated motor subunit PAM16</fullName>
    </alternativeName>
</protein>
<dbReference type="EMBL" id="CR382126">
    <property type="protein sequence ID" value="CAG98412.1"/>
    <property type="molecule type" value="Genomic_DNA"/>
</dbReference>
<dbReference type="RefSeq" id="XP_455704.1">
    <property type="nucleotide sequence ID" value="XM_455704.1"/>
</dbReference>
<dbReference type="SMR" id="Q6CK35"/>
<dbReference type="FunCoup" id="Q6CK35">
    <property type="interactions" value="264"/>
</dbReference>
<dbReference type="STRING" id="284590.Q6CK35"/>
<dbReference type="PaxDb" id="284590-Q6CK35"/>
<dbReference type="KEGG" id="kla:KLLA0_F13860g"/>
<dbReference type="eggNOG" id="KOG3442">
    <property type="taxonomic scope" value="Eukaryota"/>
</dbReference>
<dbReference type="HOGENOM" id="CLU_101461_0_1_1"/>
<dbReference type="InParanoid" id="Q6CK35"/>
<dbReference type="OMA" id="RMFKIND"/>
<dbReference type="Proteomes" id="UP000000598">
    <property type="component" value="Chromosome F"/>
</dbReference>
<dbReference type="GO" id="GO:0005744">
    <property type="term" value="C:TIM23 mitochondrial import inner membrane translocase complex"/>
    <property type="evidence" value="ECO:0007669"/>
    <property type="project" value="InterPro"/>
</dbReference>
<dbReference type="GO" id="GO:0030150">
    <property type="term" value="P:protein import into mitochondrial matrix"/>
    <property type="evidence" value="ECO:0007669"/>
    <property type="project" value="InterPro"/>
</dbReference>
<dbReference type="FunFam" id="1.10.287.110:FF:000006">
    <property type="entry name" value="Import inner membrane translocase subunit TIM16"/>
    <property type="match status" value="1"/>
</dbReference>
<dbReference type="Gene3D" id="1.10.287.110">
    <property type="entry name" value="DnaJ domain"/>
    <property type="match status" value="1"/>
</dbReference>
<dbReference type="InterPro" id="IPR036869">
    <property type="entry name" value="J_dom_sf"/>
</dbReference>
<dbReference type="InterPro" id="IPR005341">
    <property type="entry name" value="Tim16"/>
</dbReference>
<dbReference type="PANTHER" id="PTHR12388">
    <property type="entry name" value="MITOCHONDRIA ASSOCIATED GRANULOCYTE MACROPHAGE CSF SIGNALING MOLECULE"/>
    <property type="match status" value="1"/>
</dbReference>
<dbReference type="PANTHER" id="PTHR12388:SF0">
    <property type="entry name" value="MITOCHONDRIAL IMPORT INNER MEMBRANE TRANSLOCASE SUBUNIT TIM16"/>
    <property type="match status" value="1"/>
</dbReference>
<dbReference type="Pfam" id="PF03656">
    <property type="entry name" value="Pam16"/>
    <property type="match status" value="1"/>
</dbReference>
<feature type="chain" id="PRO_0000214094" description="Mitochondrial import inner membrane translocase subunit TIM16">
    <location>
        <begin position="1"/>
        <end position="139"/>
    </location>
</feature>
<feature type="region of interest" description="J-like">
    <location>
        <begin position="56"/>
        <end position="111"/>
    </location>
</feature>
<feature type="region of interest" description="Disordered" evidence="2">
    <location>
        <begin position="115"/>
        <end position="139"/>
    </location>
</feature>
<feature type="compositionally biased region" description="Polar residues" evidence="2">
    <location>
        <begin position="120"/>
        <end position="139"/>
    </location>
</feature>